<feature type="chain" id="PRO_0000390922" description="Probable sporulation protein YlmC">
    <location>
        <begin position="1"/>
        <end position="81"/>
    </location>
</feature>
<gene>
    <name type="primary">ylmC</name>
    <name type="ordered locus">BSU15360</name>
</gene>
<organism>
    <name type="scientific">Bacillus subtilis (strain 168)</name>
    <dbReference type="NCBI Taxonomy" id="224308"/>
    <lineage>
        <taxon>Bacteria</taxon>
        <taxon>Bacillati</taxon>
        <taxon>Bacillota</taxon>
        <taxon>Bacilli</taxon>
        <taxon>Bacillales</taxon>
        <taxon>Bacillaceae</taxon>
        <taxon>Bacillus</taxon>
    </lineage>
</organism>
<accession>O31725</accession>
<comment type="developmental stage">
    <text evidence="1">Expressed in the mother cell during sporulation.</text>
</comment>
<comment type="induction">
    <text evidence="1">Expression is regulated by the sporulation transcription factor sigma E.</text>
</comment>
<comment type="disruption phenotype">
    <text evidence="1">Inactivation of the gene does not affect sporulation, but a ylmC/ymxH double mutant shows a 100-fold reduction in the efficiency of sporulation.</text>
</comment>
<comment type="similarity">
    <text evidence="2">Belongs to the YlmC/YmxH family.</text>
</comment>
<name>YLMC_BACSU</name>
<sequence>MISISEFQVKDVVNVSNGKKLGSIGDIDINVTTGKIQAIILGGNGKVLGFFGKEEELVIPWRNIVKIGEDVILVRLSEPHA</sequence>
<protein>
    <recommendedName>
        <fullName evidence="2">Probable sporulation protein YlmC</fullName>
    </recommendedName>
</protein>
<keyword id="KW-1185">Reference proteome</keyword>
<keyword id="KW-0749">Sporulation</keyword>
<evidence type="ECO:0000269" key="1">
    <source>
    </source>
</evidence>
<evidence type="ECO:0000305" key="2"/>
<proteinExistence type="evidence at transcript level"/>
<reference key="1">
    <citation type="journal article" date="1997" name="Nature">
        <title>The complete genome sequence of the Gram-positive bacterium Bacillus subtilis.</title>
        <authorList>
            <person name="Kunst F."/>
            <person name="Ogasawara N."/>
            <person name="Moszer I."/>
            <person name="Albertini A.M."/>
            <person name="Alloni G."/>
            <person name="Azevedo V."/>
            <person name="Bertero M.G."/>
            <person name="Bessieres P."/>
            <person name="Bolotin A."/>
            <person name="Borchert S."/>
            <person name="Borriss R."/>
            <person name="Boursier L."/>
            <person name="Brans A."/>
            <person name="Braun M."/>
            <person name="Brignell S.C."/>
            <person name="Bron S."/>
            <person name="Brouillet S."/>
            <person name="Bruschi C.V."/>
            <person name="Caldwell B."/>
            <person name="Capuano V."/>
            <person name="Carter N.M."/>
            <person name="Choi S.-K."/>
            <person name="Codani J.-J."/>
            <person name="Connerton I.F."/>
            <person name="Cummings N.J."/>
            <person name="Daniel R.A."/>
            <person name="Denizot F."/>
            <person name="Devine K.M."/>
            <person name="Duesterhoeft A."/>
            <person name="Ehrlich S.D."/>
            <person name="Emmerson P.T."/>
            <person name="Entian K.-D."/>
            <person name="Errington J."/>
            <person name="Fabret C."/>
            <person name="Ferrari E."/>
            <person name="Foulger D."/>
            <person name="Fritz C."/>
            <person name="Fujita M."/>
            <person name="Fujita Y."/>
            <person name="Fuma S."/>
            <person name="Galizzi A."/>
            <person name="Galleron N."/>
            <person name="Ghim S.-Y."/>
            <person name="Glaser P."/>
            <person name="Goffeau A."/>
            <person name="Golightly E.J."/>
            <person name="Grandi G."/>
            <person name="Guiseppi G."/>
            <person name="Guy B.J."/>
            <person name="Haga K."/>
            <person name="Haiech J."/>
            <person name="Harwood C.R."/>
            <person name="Henaut A."/>
            <person name="Hilbert H."/>
            <person name="Holsappel S."/>
            <person name="Hosono S."/>
            <person name="Hullo M.-F."/>
            <person name="Itaya M."/>
            <person name="Jones L.-M."/>
            <person name="Joris B."/>
            <person name="Karamata D."/>
            <person name="Kasahara Y."/>
            <person name="Klaerr-Blanchard M."/>
            <person name="Klein C."/>
            <person name="Kobayashi Y."/>
            <person name="Koetter P."/>
            <person name="Koningstein G."/>
            <person name="Krogh S."/>
            <person name="Kumano M."/>
            <person name="Kurita K."/>
            <person name="Lapidus A."/>
            <person name="Lardinois S."/>
            <person name="Lauber J."/>
            <person name="Lazarevic V."/>
            <person name="Lee S.-M."/>
            <person name="Levine A."/>
            <person name="Liu H."/>
            <person name="Masuda S."/>
            <person name="Mauel C."/>
            <person name="Medigue C."/>
            <person name="Medina N."/>
            <person name="Mellado R.P."/>
            <person name="Mizuno M."/>
            <person name="Moestl D."/>
            <person name="Nakai S."/>
            <person name="Noback M."/>
            <person name="Noone D."/>
            <person name="O'Reilly M."/>
            <person name="Ogawa K."/>
            <person name="Ogiwara A."/>
            <person name="Oudega B."/>
            <person name="Park S.-H."/>
            <person name="Parro V."/>
            <person name="Pohl T.M."/>
            <person name="Portetelle D."/>
            <person name="Porwollik S."/>
            <person name="Prescott A.M."/>
            <person name="Presecan E."/>
            <person name="Pujic P."/>
            <person name="Purnelle B."/>
            <person name="Rapoport G."/>
            <person name="Rey M."/>
            <person name="Reynolds S."/>
            <person name="Rieger M."/>
            <person name="Rivolta C."/>
            <person name="Rocha E."/>
            <person name="Roche B."/>
            <person name="Rose M."/>
            <person name="Sadaie Y."/>
            <person name="Sato T."/>
            <person name="Scanlan E."/>
            <person name="Schleich S."/>
            <person name="Schroeter R."/>
            <person name="Scoffone F."/>
            <person name="Sekiguchi J."/>
            <person name="Sekowska A."/>
            <person name="Seror S.J."/>
            <person name="Serror P."/>
            <person name="Shin B.-S."/>
            <person name="Soldo B."/>
            <person name="Sorokin A."/>
            <person name="Tacconi E."/>
            <person name="Takagi T."/>
            <person name="Takahashi H."/>
            <person name="Takemaru K."/>
            <person name="Takeuchi M."/>
            <person name="Tamakoshi A."/>
            <person name="Tanaka T."/>
            <person name="Terpstra P."/>
            <person name="Tognoni A."/>
            <person name="Tosato V."/>
            <person name="Uchiyama S."/>
            <person name="Vandenbol M."/>
            <person name="Vannier F."/>
            <person name="Vassarotti A."/>
            <person name="Viari A."/>
            <person name="Wambutt R."/>
            <person name="Wedler E."/>
            <person name="Wedler H."/>
            <person name="Weitzenegger T."/>
            <person name="Winters P."/>
            <person name="Wipat A."/>
            <person name="Yamamoto H."/>
            <person name="Yamane K."/>
            <person name="Yasumoto K."/>
            <person name="Yata K."/>
            <person name="Yoshida K."/>
            <person name="Yoshikawa H.-F."/>
            <person name="Zumstein E."/>
            <person name="Yoshikawa H."/>
            <person name="Danchin A."/>
        </authorList>
    </citation>
    <scope>NUCLEOTIDE SEQUENCE [LARGE SCALE GENOMIC DNA]</scope>
    <source>
        <strain>168</strain>
    </source>
</reference>
<reference key="2">
    <citation type="journal article" date="2013" name="J. Bacteriol.">
        <title>A genomic signature and the identification of new sporulation genes.</title>
        <authorList>
            <person name="Abecasis A.B."/>
            <person name="Serrano M."/>
            <person name="Alves R."/>
            <person name="Quintais L."/>
            <person name="Pereira-Leal J.B."/>
            <person name="Henriques A.O."/>
        </authorList>
    </citation>
    <scope>DEVELOPMENTAL STAGE</scope>
    <scope>INDUCTION</scope>
    <scope>DISRUPTION PHENOTYPE</scope>
</reference>
<dbReference type="EMBL" id="AL009126">
    <property type="protein sequence ID" value="CAB13410.1"/>
    <property type="molecule type" value="Genomic_DNA"/>
</dbReference>
<dbReference type="PIR" id="C69876">
    <property type="entry name" value="C69876"/>
</dbReference>
<dbReference type="RefSeq" id="NP_389419.1">
    <property type="nucleotide sequence ID" value="NC_000964.3"/>
</dbReference>
<dbReference type="RefSeq" id="WP_003232153.1">
    <property type="nucleotide sequence ID" value="NZ_OZ025638.1"/>
</dbReference>
<dbReference type="SMR" id="O31725"/>
<dbReference type="FunCoup" id="O31725">
    <property type="interactions" value="50"/>
</dbReference>
<dbReference type="STRING" id="224308.BSU15360"/>
<dbReference type="PaxDb" id="224308-BSU15360"/>
<dbReference type="EnsemblBacteria" id="CAB13410">
    <property type="protein sequence ID" value="CAB13410"/>
    <property type="gene ID" value="BSU_15360"/>
</dbReference>
<dbReference type="GeneID" id="939682"/>
<dbReference type="KEGG" id="bsu:BSU15360"/>
<dbReference type="PATRIC" id="fig|224308.179.peg.1674"/>
<dbReference type="eggNOG" id="COG1873">
    <property type="taxonomic scope" value="Bacteria"/>
</dbReference>
<dbReference type="InParanoid" id="O31725"/>
<dbReference type="OrthoDB" id="6024937at2"/>
<dbReference type="PhylomeDB" id="O31725"/>
<dbReference type="BioCyc" id="BSUB:BSU15360-MONOMER"/>
<dbReference type="Proteomes" id="UP000001570">
    <property type="component" value="Chromosome"/>
</dbReference>
<dbReference type="GO" id="GO:0030435">
    <property type="term" value="P:sporulation resulting in formation of a cellular spore"/>
    <property type="evidence" value="ECO:0007669"/>
    <property type="project" value="UniProtKB-KW"/>
</dbReference>
<dbReference type="Gene3D" id="2.30.30.240">
    <property type="entry name" value="PRC-barrel domain"/>
    <property type="match status" value="1"/>
</dbReference>
<dbReference type="InterPro" id="IPR027275">
    <property type="entry name" value="PRC-brl_dom"/>
</dbReference>
<dbReference type="InterPro" id="IPR011033">
    <property type="entry name" value="PRC_barrel-like_sf"/>
</dbReference>
<dbReference type="InterPro" id="IPR014238">
    <property type="entry name" value="Spore_YlmC/YmxH"/>
</dbReference>
<dbReference type="NCBIfam" id="TIGR02888">
    <property type="entry name" value="spore_YlmC_YmxH"/>
    <property type="match status" value="1"/>
</dbReference>
<dbReference type="PANTHER" id="PTHR40061">
    <property type="entry name" value="SPORULATION PROTEIN YLMC-RELATED"/>
    <property type="match status" value="1"/>
</dbReference>
<dbReference type="PANTHER" id="PTHR40061:SF1">
    <property type="entry name" value="SPORULATION PROTEIN YLMC-RELATED"/>
    <property type="match status" value="1"/>
</dbReference>
<dbReference type="Pfam" id="PF05239">
    <property type="entry name" value="PRC"/>
    <property type="match status" value="1"/>
</dbReference>
<dbReference type="SUPFAM" id="SSF50346">
    <property type="entry name" value="PRC-barrel domain"/>
    <property type="match status" value="1"/>
</dbReference>